<accession>Q17QJ0</accession>
<feature type="chain" id="PRO_0000284014" description="Histone chaperone ASF1B">
    <location>
        <begin position="1"/>
        <end position="202"/>
    </location>
</feature>
<feature type="region of interest" description="Interaction with histone H3 and CHAF1B" evidence="2">
    <location>
        <begin position="1"/>
        <end position="156"/>
    </location>
</feature>
<feature type="modified residue" description="Phosphoserine; by TLK2" evidence="1">
    <location>
        <position position="198"/>
    </location>
</feature>
<sequence>MAKVSVLNVAVLENPSPFHSPFRFEISFECNEALADDLEWKIIYVGSAESEEFDQILDSVLVGPVPAGRHMFVFQADAPNPSLIPETDAVGVTVVLITCTYHGQEFIRVGYYVNNEYLSPELRENPPLKPDFSQLQRNILASNPRVTRFHINWDNNMDRLEAIENQDSSLGCGLPLSCTPIKGLGLPSCIPGLLPENSMDCI</sequence>
<gene>
    <name type="primary">ASF1B</name>
</gene>
<dbReference type="EMBL" id="BC118332">
    <property type="protein sequence ID" value="AAI18333.1"/>
    <property type="molecule type" value="mRNA"/>
</dbReference>
<dbReference type="RefSeq" id="NP_001068921.1">
    <property type="nucleotide sequence ID" value="NM_001075453.1"/>
</dbReference>
<dbReference type="SMR" id="Q17QJ0"/>
<dbReference type="FunCoup" id="Q17QJ0">
    <property type="interactions" value="2495"/>
</dbReference>
<dbReference type="STRING" id="9913.ENSBTAP00000005338"/>
<dbReference type="PaxDb" id="9913-ENSBTAP00000005338"/>
<dbReference type="Ensembl" id="ENSBTAT00000005338.3">
    <property type="protein sequence ID" value="ENSBTAP00000005338.2"/>
    <property type="gene ID" value="ENSBTAG00000004085.4"/>
</dbReference>
<dbReference type="GeneID" id="510538"/>
<dbReference type="KEGG" id="bta:510538"/>
<dbReference type="CTD" id="55723"/>
<dbReference type="VEuPathDB" id="HostDB:ENSBTAG00000004085"/>
<dbReference type="VGNC" id="VGNC:50605">
    <property type="gene designation" value="ASF1B"/>
</dbReference>
<dbReference type="eggNOG" id="KOG3265">
    <property type="taxonomic scope" value="Eukaryota"/>
</dbReference>
<dbReference type="GeneTree" id="ENSGT00390000004692"/>
<dbReference type="HOGENOM" id="CLU_060354_1_2_1"/>
<dbReference type="InParanoid" id="Q17QJ0"/>
<dbReference type="OMA" id="HINWDSN"/>
<dbReference type="OrthoDB" id="29755at2759"/>
<dbReference type="TreeFam" id="TF106429"/>
<dbReference type="Proteomes" id="UP000009136">
    <property type="component" value="Chromosome 7"/>
</dbReference>
<dbReference type="Bgee" id="ENSBTAG00000004085">
    <property type="expression patterns" value="Expressed in oocyte and 106 other cell types or tissues"/>
</dbReference>
<dbReference type="GO" id="GO:0000785">
    <property type="term" value="C:chromatin"/>
    <property type="evidence" value="ECO:0000318"/>
    <property type="project" value="GO_Central"/>
</dbReference>
<dbReference type="GO" id="GO:0005829">
    <property type="term" value="C:cytosol"/>
    <property type="evidence" value="ECO:0007669"/>
    <property type="project" value="UniProtKB-SubCell"/>
</dbReference>
<dbReference type="GO" id="GO:0005654">
    <property type="term" value="C:nucleoplasm"/>
    <property type="evidence" value="ECO:0007669"/>
    <property type="project" value="Ensembl"/>
</dbReference>
<dbReference type="GO" id="GO:0005634">
    <property type="term" value="C:nucleus"/>
    <property type="evidence" value="ECO:0000318"/>
    <property type="project" value="GO_Central"/>
</dbReference>
<dbReference type="GO" id="GO:0032991">
    <property type="term" value="C:protein-containing complex"/>
    <property type="evidence" value="ECO:0007669"/>
    <property type="project" value="Ensembl"/>
</dbReference>
<dbReference type="GO" id="GO:0042393">
    <property type="term" value="F:histone binding"/>
    <property type="evidence" value="ECO:0000318"/>
    <property type="project" value="GO_Central"/>
</dbReference>
<dbReference type="GO" id="GO:0140713">
    <property type="term" value="F:histone chaperone activity"/>
    <property type="evidence" value="ECO:0000250"/>
    <property type="project" value="UniProtKB"/>
</dbReference>
<dbReference type="GO" id="GO:0001835">
    <property type="term" value="P:blastocyst hatching"/>
    <property type="evidence" value="ECO:0007669"/>
    <property type="project" value="Ensembl"/>
</dbReference>
<dbReference type="GO" id="GO:0006335">
    <property type="term" value="P:DNA replication-dependent chromatin assembly"/>
    <property type="evidence" value="ECO:0000318"/>
    <property type="project" value="GO_Central"/>
</dbReference>
<dbReference type="GO" id="GO:0006334">
    <property type="term" value="P:nucleosome assembly"/>
    <property type="evidence" value="ECO:0007669"/>
    <property type="project" value="Ensembl"/>
</dbReference>
<dbReference type="FunFam" id="2.60.40.1490:FF:000001">
    <property type="entry name" value="Histone chaperone ASF1"/>
    <property type="match status" value="1"/>
</dbReference>
<dbReference type="Gene3D" id="2.60.40.1490">
    <property type="entry name" value="Histone chaperone ASF1-like"/>
    <property type="match status" value="1"/>
</dbReference>
<dbReference type="InterPro" id="IPR006818">
    <property type="entry name" value="ASF1-like"/>
</dbReference>
<dbReference type="InterPro" id="IPR036747">
    <property type="entry name" value="ASF1-like_sf"/>
</dbReference>
<dbReference type="PANTHER" id="PTHR12040">
    <property type="entry name" value="ANTI-SILENCING PROTEIN 1"/>
    <property type="match status" value="1"/>
</dbReference>
<dbReference type="PANTHER" id="PTHR12040:SF22">
    <property type="entry name" value="HISTONE CHAPERONE ASF1B"/>
    <property type="match status" value="1"/>
</dbReference>
<dbReference type="Pfam" id="PF04729">
    <property type="entry name" value="ASF1_hist_chap"/>
    <property type="match status" value="1"/>
</dbReference>
<dbReference type="SUPFAM" id="SSF101546">
    <property type="entry name" value="ASF1-like"/>
    <property type="match status" value="1"/>
</dbReference>
<protein>
    <recommendedName>
        <fullName evidence="3">Histone chaperone ASF1B</fullName>
    </recommendedName>
    <alternativeName>
        <fullName>Anti-silencing function protein 1 homolog B</fullName>
    </alternativeName>
</protein>
<proteinExistence type="evidence at transcript level"/>
<keyword id="KW-0143">Chaperone</keyword>
<keyword id="KW-0156">Chromatin regulator</keyword>
<keyword id="KW-0963">Cytoplasm</keyword>
<keyword id="KW-0539">Nucleus</keyword>
<keyword id="KW-0597">Phosphoprotein</keyword>
<keyword id="KW-1185">Reference proteome</keyword>
<keyword id="KW-0804">Transcription</keyword>
<keyword id="KW-0805">Transcription regulation</keyword>
<reference key="1">
    <citation type="submission" date="2006-06" db="EMBL/GenBank/DDBJ databases">
        <authorList>
            <consortium name="NIH - Mammalian Gene Collection (MGC) project"/>
        </authorList>
    </citation>
    <scope>NUCLEOTIDE SEQUENCE [LARGE SCALE MRNA]</scope>
    <source>
        <strain>Hereford</strain>
        <tissue>Fetal skin</tissue>
    </source>
</reference>
<organism>
    <name type="scientific">Bos taurus</name>
    <name type="common">Bovine</name>
    <dbReference type="NCBI Taxonomy" id="9913"/>
    <lineage>
        <taxon>Eukaryota</taxon>
        <taxon>Metazoa</taxon>
        <taxon>Chordata</taxon>
        <taxon>Craniata</taxon>
        <taxon>Vertebrata</taxon>
        <taxon>Euteleostomi</taxon>
        <taxon>Mammalia</taxon>
        <taxon>Eutheria</taxon>
        <taxon>Laurasiatheria</taxon>
        <taxon>Artiodactyla</taxon>
        <taxon>Ruminantia</taxon>
        <taxon>Pecora</taxon>
        <taxon>Bovidae</taxon>
        <taxon>Bovinae</taxon>
        <taxon>Bos</taxon>
    </lineage>
</organism>
<comment type="function">
    <text evidence="1">Histone chaperone that facilitates histone deposition and histone exchange and removal during nucleosome assembly and disassembly. Cooperates with chromatin assembly factor 1 (CAF-1) to promote replication-dependent chromatin assembly. Also involved in the nuclear import of the histone H3-H4 dimer together with importin-4 (IPO4): specifically recognizes and binds newly synthesized histones with the monomethylation of H3 'Lys-9' (H3K9me1) and diacetylation at 'Lys-5' and 'Lys-12' of H4 (H4K5ac and H4K12ac) marks in the cytosol. Does not participate in replication-independent nucleosome deposition which is mediated by ASF1A and HIRA. Required for gonad development.</text>
</comment>
<comment type="subunit">
    <text evidence="1">Interacts with histone H3 (via C-terminus), including histone H3.1, H3.2 and H3.3, and histone H4; the interaction with H3 is direct (By similarity). Interacts with the CHAF1A, CHAF1B and RBBP4 subunits of the CAF-1 complex (By similarity). Interacts with HAT1, NASP and TAF1 (By similarity). Found in a soluble complex with NASP and histones H3 and H4; the interaction with NASP is probably indirect and mediated by H3-H4 (By similarity). Interacts with CDAN1 (By similarity). Found in a cytosolic complex with CDAN1, ASF1A, IPO4 and histones H3.1 and H4 (By similarity). Interacts with CREBBP (By similarity).</text>
</comment>
<comment type="subcellular location">
    <subcellularLocation>
        <location evidence="1">Nucleus</location>
    </subcellularLocation>
    <subcellularLocation>
        <location evidence="1">Cytoplasm</location>
        <location evidence="1">Cytosol</location>
    </subcellularLocation>
</comment>
<comment type="PTM">
    <text evidence="1">Phosphorylated by TLK1 and TLK2.</text>
</comment>
<comment type="similarity">
    <text evidence="3">Belongs to the ASF1 family.</text>
</comment>
<evidence type="ECO:0000250" key="1">
    <source>
        <dbReference type="UniProtKB" id="Q9NVP2"/>
    </source>
</evidence>
<evidence type="ECO:0000250" key="2">
    <source>
        <dbReference type="UniProtKB" id="Q9Y294"/>
    </source>
</evidence>
<evidence type="ECO:0000305" key="3"/>
<name>ASF1B_BOVIN</name>